<keyword id="KW-0067">ATP-binding</keyword>
<keyword id="KW-0460">Magnesium</keyword>
<keyword id="KW-0547">Nucleotide-binding</keyword>
<keyword id="KW-1185">Reference proteome</keyword>
<keyword id="KW-0808">Transferase</keyword>
<keyword id="KW-0819">tRNA processing</keyword>
<proteinExistence type="inferred from homology"/>
<evidence type="ECO:0000255" key="1">
    <source>
        <dbReference type="HAMAP-Rule" id="MF_00185"/>
    </source>
</evidence>
<dbReference type="EC" id="2.5.1.75" evidence="1"/>
<dbReference type="EMBL" id="CP001032">
    <property type="protein sequence ID" value="ACB75840.1"/>
    <property type="molecule type" value="Genomic_DNA"/>
</dbReference>
<dbReference type="RefSeq" id="WP_012375375.1">
    <property type="nucleotide sequence ID" value="NC_010571.1"/>
</dbReference>
<dbReference type="SMR" id="B1ZT51"/>
<dbReference type="STRING" id="452637.Oter_2558"/>
<dbReference type="KEGG" id="ote:Oter_2558"/>
<dbReference type="eggNOG" id="COG0324">
    <property type="taxonomic scope" value="Bacteria"/>
</dbReference>
<dbReference type="HOGENOM" id="CLU_032616_0_1_0"/>
<dbReference type="OrthoDB" id="9776390at2"/>
<dbReference type="Proteomes" id="UP000007013">
    <property type="component" value="Chromosome"/>
</dbReference>
<dbReference type="GO" id="GO:0005524">
    <property type="term" value="F:ATP binding"/>
    <property type="evidence" value="ECO:0007669"/>
    <property type="project" value="UniProtKB-UniRule"/>
</dbReference>
<dbReference type="GO" id="GO:0052381">
    <property type="term" value="F:tRNA dimethylallyltransferase activity"/>
    <property type="evidence" value="ECO:0007669"/>
    <property type="project" value="UniProtKB-UniRule"/>
</dbReference>
<dbReference type="GO" id="GO:0006400">
    <property type="term" value="P:tRNA modification"/>
    <property type="evidence" value="ECO:0007669"/>
    <property type="project" value="TreeGrafter"/>
</dbReference>
<dbReference type="Gene3D" id="1.10.20.140">
    <property type="match status" value="1"/>
</dbReference>
<dbReference type="Gene3D" id="3.40.50.300">
    <property type="entry name" value="P-loop containing nucleotide triphosphate hydrolases"/>
    <property type="match status" value="1"/>
</dbReference>
<dbReference type="HAMAP" id="MF_00185">
    <property type="entry name" value="IPP_trans"/>
    <property type="match status" value="1"/>
</dbReference>
<dbReference type="InterPro" id="IPR039657">
    <property type="entry name" value="Dimethylallyltransferase"/>
</dbReference>
<dbReference type="InterPro" id="IPR018022">
    <property type="entry name" value="IPT"/>
</dbReference>
<dbReference type="InterPro" id="IPR027417">
    <property type="entry name" value="P-loop_NTPase"/>
</dbReference>
<dbReference type="NCBIfam" id="TIGR00174">
    <property type="entry name" value="miaA"/>
    <property type="match status" value="1"/>
</dbReference>
<dbReference type="PANTHER" id="PTHR11088">
    <property type="entry name" value="TRNA DIMETHYLALLYLTRANSFERASE"/>
    <property type="match status" value="1"/>
</dbReference>
<dbReference type="PANTHER" id="PTHR11088:SF60">
    <property type="entry name" value="TRNA DIMETHYLALLYLTRANSFERASE"/>
    <property type="match status" value="1"/>
</dbReference>
<dbReference type="Pfam" id="PF01715">
    <property type="entry name" value="IPPT"/>
    <property type="match status" value="1"/>
</dbReference>
<dbReference type="SUPFAM" id="SSF52540">
    <property type="entry name" value="P-loop containing nucleoside triphosphate hydrolases"/>
    <property type="match status" value="1"/>
</dbReference>
<reference key="1">
    <citation type="journal article" date="2011" name="J. Bacteriol.">
        <title>Genome sequence of the verrucomicrobium Opitutus terrae PB90-1, an abundant inhabitant of rice paddy soil ecosystems.</title>
        <authorList>
            <person name="van Passel M.W."/>
            <person name="Kant R."/>
            <person name="Palva A."/>
            <person name="Copeland A."/>
            <person name="Lucas S."/>
            <person name="Lapidus A."/>
            <person name="Glavina del Rio T."/>
            <person name="Pitluck S."/>
            <person name="Goltsman E."/>
            <person name="Clum A."/>
            <person name="Sun H."/>
            <person name="Schmutz J."/>
            <person name="Larimer F.W."/>
            <person name="Land M.L."/>
            <person name="Hauser L."/>
            <person name="Kyrpides N."/>
            <person name="Mikhailova N."/>
            <person name="Richardson P.P."/>
            <person name="Janssen P.H."/>
            <person name="de Vos W.M."/>
            <person name="Smidt H."/>
        </authorList>
    </citation>
    <scope>NUCLEOTIDE SEQUENCE [LARGE SCALE GENOMIC DNA]</scope>
    <source>
        <strain>DSM 11246 / JCM 15787 / PB90-1</strain>
    </source>
</reference>
<protein>
    <recommendedName>
        <fullName evidence="1">tRNA dimethylallyltransferase</fullName>
        <ecNumber evidence="1">2.5.1.75</ecNumber>
    </recommendedName>
    <alternativeName>
        <fullName evidence="1">Dimethylallyl diphosphate:tRNA dimethylallyltransferase</fullName>
        <shortName evidence="1">DMAPP:tRNA dimethylallyltransferase</shortName>
        <shortName evidence="1">DMATase</shortName>
    </alternativeName>
    <alternativeName>
        <fullName evidence="1">Isopentenyl-diphosphate:tRNA isopentenyltransferase</fullName>
        <shortName evidence="1">IPP transferase</shortName>
        <shortName evidence="1">IPPT</shortName>
        <shortName evidence="1">IPTase</shortName>
    </alternativeName>
</protein>
<feature type="chain" id="PRO_1000098674" description="tRNA dimethylallyltransferase">
    <location>
        <begin position="1"/>
        <end position="307"/>
    </location>
</feature>
<feature type="region of interest" description="Interaction with substrate tRNA" evidence="1">
    <location>
        <begin position="41"/>
        <end position="44"/>
    </location>
</feature>
<feature type="binding site" evidence="1">
    <location>
        <begin position="16"/>
        <end position="23"/>
    </location>
    <ligand>
        <name>ATP</name>
        <dbReference type="ChEBI" id="CHEBI:30616"/>
    </ligand>
</feature>
<feature type="binding site" evidence="1">
    <location>
        <begin position="18"/>
        <end position="23"/>
    </location>
    <ligand>
        <name>substrate</name>
    </ligand>
</feature>
<feature type="site" description="Interaction with substrate tRNA" evidence="1">
    <location>
        <position position="107"/>
    </location>
</feature>
<accession>B1ZT51</accession>
<gene>
    <name evidence="1" type="primary">miaA</name>
    <name type="ordered locus">Oter_2558</name>
</gene>
<name>MIAA_OPITP</name>
<sequence>MNAASTDKPRLRVLAGCTAVGKTEWALRWAEAHNAEIVSCDSLLFYRGMDIGTAKPTAGELARVPHHLVDVCDVREAMNIAGYVAAARRALTEIAARGREALVVGGSGFYLKAFFGPVADDVEVSAAVRAEVAALTPAAAVERLRQLNPPGLGALDTANPRRVVRALERCLASGRTLAELSAAFARQPGPFADWDARLTVLDRDPVELNQRIAARVAAMLAAGLVDEVKRLLPAGLKENPSAARAIGYREVIDLLEGRLPAASLAAEIEKNTRALVKKQRTWFRTQLPDHRRVDAAVLRDAGGLFDF</sequence>
<comment type="function">
    <text evidence="1">Catalyzes the transfer of a dimethylallyl group onto the adenine at position 37 in tRNAs that read codons beginning with uridine, leading to the formation of N6-(dimethylallyl)adenosine (i(6)A).</text>
</comment>
<comment type="catalytic activity">
    <reaction evidence="1">
        <text>adenosine(37) in tRNA + dimethylallyl diphosphate = N(6)-dimethylallyladenosine(37) in tRNA + diphosphate</text>
        <dbReference type="Rhea" id="RHEA:26482"/>
        <dbReference type="Rhea" id="RHEA-COMP:10162"/>
        <dbReference type="Rhea" id="RHEA-COMP:10375"/>
        <dbReference type="ChEBI" id="CHEBI:33019"/>
        <dbReference type="ChEBI" id="CHEBI:57623"/>
        <dbReference type="ChEBI" id="CHEBI:74411"/>
        <dbReference type="ChEBI" id="CHEBI:74415"/>
        <dbReference type="EC" id="2.5.1.75"/>
    </reaction>
</comment>
<comment type="cofactor">
    <cofactor evidence="1">
        <name>Mg(2+)</name>
        <dbReference type="ChEBI" id="CHEBI:18420"/>
    </cofactor>
</comment>
<comment type="subunit">
    <text evidence="1">Monomer.</text>
</comment>
<comment type="similarity">
    <text evidence="1">Belongs to the IPP transferase family.</text>
</comment>
<organism>
    <name type="scientific">Opitutus terrae (strain DSM 11246 / JCM 15787 / PB90-1)</name>
    <dbReference type="NCBI Taxonomy" id="452637"/>
    <lineage>
        <taxon>Bacteria</taxon>
        <taxon>Pseudomonadati</taxon>
        <taxon>Verrucomicrobiota</taxon>
        <taxon>Opitutia</taxon>
        <taxon>Opitutales</taxon>
        <taxon>Opitutaceae</taxon>
        <taxon>Opitutus</taxon>
    </lineage>
</organism>